<gene>
    <name evidence="1" type="primary">dcd</name>
    <name type="ordered locus">SBO_0892</name>
</gene>
<dbReference type="EC" id="3.5.4.13" evidence="1"/>
<dbReference type="EMBL" id="CP000036">
    <property type="protein sequence ID" value="ABB65560.1"/>
    <property type="molecule type" value="Genomic_DNA"/>
</dbReference>
<dbReference type="RefSeq" id="WP_001234767.1">
    <property type="nucleotide sequence ID" value="NC_007613.1"/>
</dbReference>
<dbReference type="SMR" id="Q323E8"/>
<dbReference type="GeneID" id="93775126"/>
<dbReference type="KEGG" id="sbo:SBO_0892"/>
<dbReference type="HOGENOM" id="CLU_087476_2_0_6"/>
<dbReference type="UniPathway" id="UPA00610">
    <property type="reaction ID" value="UER00665"/>
</dbReference>
<dbReference type="Proteomes" id="UP000007067">
    <property type="component" value="Chromosome"/>
</dbReference>
<dbReference type="GO" id="GO:0008829">
    <property type="term" value="F:dCTP deaminase activity"/>
    <property type="evidence" value="ECO:0007669"/>
    <property type="project" value="UniProtKB-UniRule"/>
</dbReference>
<dbReference type="GO" id="GO:0000166">
    <property type="term" value="F:nucleotide binding"/>
    <property type="evidence" value="ECO:0007669"/>
    <property type="project" value="UniProtKB-KW"/>
</dbReference>
<dbReference type="GO" id="GO:0006226">
    <property type="term" value="P:dUMP biosynthetic process"/>
    <property type="evidence" value="ECO:0007669"/>
    <property type="project" value="UniProtKB-UniPathway"/>
</dbReference>
<dbReference type="GO" id="GO:0006229">
    <property type="term" value="P:dUTP biosynthetic process"/>
    <property type="evidence" value="ECO:0007669"/>
    <property type="project" value="UniProtKB-UniRule"/>
</dbReference>
<dbReference type="GO" id="GO:0015949">
    <property type="term" value="P:nucleobase-containing small molecule interconversion"/>
    <property type="evidence" value="ECO:0007669"/>
    <property type="project" value="TreeGrafter"/>
</dbReference>
<dbReference type="CDD" id="cd07557">
    <property type="entry name" value="trimeric_dUTPase"/>
    <property type="match status" value="1"/>
</dbReference>
<dbReference type="FunFam" id="2.70.40.10:FF:000003">
    <property type="entry name" value="dCTP deaminase"/>
    <property type="match status" value="1"/>
</dbReference>
<dbReference type="Gene3D" id="2.70.40.10">
    <property type="match status" value="1"/>
</dbReference>
<dbReference type="HAMAP" id="MF_00146">
    <property type="entry name" value="dCTP_deaminase"/>
    <property type="match status" value="1"/>
</dbReference>
<dbReference type="InterPro" id="IPR011962">
    <property type="entry name" value="dCTP_deaminase"/>
</dbReference>
<dbReference type="InterPro" id="IPR036157">
    <property type="entry name" value="dUTPase-like_sf"/>
</dbReference>
<dbReference type="InterPro" id="IPR033704">
    <property type="entry name" value="dUTPase_trimeric"/>
</dbReference>
<dbReference type="NCBIfam" id="TIGR02274">
    <property type="entry name" value="dCTP_deam"/>
    <property type="match status" value="1"/>
</dbReference>
<dbReference type="PANTHER" id="PTHR42680">
    <property type="entry name" value="DCTP DEAMINASE"/>
    <property type="match status" value="1"/>
</dbReference>
<dbReference type="PANTHER" id="PTHR42680:SF3">
    <property type="entry name" value="DCTP DEAMINASE"/>
    <property type="match status" value="1"/>
</dbReference>
<dbReference type="Pfam" id="PF22769">
    <property type="entry name" value="DCD"/>
    <property type="match status" value="1"/>
</dbReference>
<dbReference type="SUPFAM" id="SSF51283">
    <property type="entry name" value="dUTPase-like"/>
    <property type="match status" value="1"/>
</dbReference>
<sequence length="193" mass="21221">MRLCDRDIEAWLDEGRLSINPRPPVERINGATVDVRLGNKFRTFRGHTAAFIDLSGPKDEVSAALDRVMSDEIVLDEGEAFYLHPGELALAVTLESVTLPADLVGWLDGRSSLARLGLMVHVTAHRIDPGWSGCIVLEFYNSGKLPLALRPGMLIGALSFEPLSGPAARPYNRREDAKYRNQQGAVASRIDKD</sequence>
<organism>
    <name type="scientific">Shigella boydii serotype 4 (strain Sb227)</name>
    <dbReference type="NCBI Taxonomy" id="300268"/>
    <lineage>
        <taxon>Bacteria</taxon>
        <taxon>Pseudomonadati</taxon>
        <taxon>Pseudomonadota</taxon>
        <taxon>Gammaproteobacteria</taxon>
        <taxon>Enterobacterales</taxon>
        <taxon>Enterobacteriaceae</taxon>
        <taxon>Shigella</taxon>
    </lineage>
</organism>
<proteinExistence type="inferred from homology"/>
<comment type="function">
    <text evidence="1">Catalyzes the deamination of dCTP to dUTP.</text>
</comment>
<comment type="catalytic activity">
    <reaction evidence="1">
        <text>dCTP + H2O + H(+) = dUTP + NH4(+)</text>
        <dbReference type="Rhea" id="RHEA:22680"/>
        <dbReference type="ChEBI" id="CHEBI:15377"/>
        <dbReference type="ChEBI" id="CHEBI:15378"/>
        <dbReference type="ChEBI" id="CHEBI:28938"/>
        <dbReference type="ChEBI" id="CHEBI:61481"/>
        <dbReference type="ChEBI" id="CHEBI:61555"/>
        <dbReference type="EC" id="3.5.4.13"/>
    </reaction>
</comment>
<comment type="pathway">
    <text evidence="1">Pyrimidine metabolism; dUMP biosynthesis; dUMP from dCTP (dUTP route): step 1/2.</text>
</comment>
<comment type="subunit">
    <text evidence="1">Homotrimer.</text>
</comment>
<comment type="similarity">
    <text evidence="1">Belongs to the dCTP deaminase family.</text>
</comment>
<feature type="chain" id="PRO_1000009816" description="dCTP deaminase">
    <location>
        <begin position="1"/>
        <end position="193"/>
    </location>
</feature>
<feature type="region of interest" description="Disordered" evidence="2">
    <location>
        <begin position="169"/>
        <end position="193"/>
    </location>
</feature>
<feature type="active site" description="Proton donor/acceptor" evidence="1">
    <location>
        <position position="138"/>
    </location>
</feature>
<feature type="binding site" evidence="1">
    <location>
        <begin position="110"/>
        <end position="115"/>
    </location>
    <ligand>
        <name>dCTP</name>
        <dbReference type="ChEBI" id="CHEBI:61481"/>
    </ligand>
</feature>
<feature type="binding site" evidence="1">
    <location>
        <position position="128"/>
    </location>
    <ligand>
        <name>dCTP</name>
        <dbReference type="ChEBI" id="CHEBI:61481"/>
    </ligand>
</feature>
<feature type="binding site" evidence="1">
    <location>
        <begin position="136"/>
        <end position="138"/>
    </location>
    <ligand>
        <name>dCTP</name>
        <dbReference type="ChEBI" id="CHEBI:61481"/>
    </ligand>
</feature>
<feature type="binding site" evidence="1">
    <location>
        <position position="171"/>
    </location>
    <ligand>
        <name>dCTP</name>
        <dbReference type="ChEBI" id="CHEBI:61481"/>
    </ligand>
</feature>
<feature type="binding site" evidence="1">
    <location>
        <position position="178"/>
    </location>
    <ligand>
        <name>dCTP</name>
        <dbReference type="ChEBI" id="CHEBI:61481"/>
    </ligand>
</feature>
<feature type="binding site" evidence="1">
    <location>
        <position position="182"/>
    </location>
    <ligand>
        <name>dCTP</name>
        <dbReference type="ChEBI" id="CHEBI:61481"/>
    </ligand>
</feature>
<name>DCD_SHIBS</name>
<evidence type="ECO:0000255" key="1">
    <source>
        <dbReference type="HAMAP-Rule" id="MF_00146"/>
    </source>
</evidence>
<evidence type="ECO:0000256" key="2">
    <source>
        <dbReference type="SAM" id="MobiDB-lite"/>
    </source>
</evidence>
<reference key="1">
    <citation type="journal article" date="2005" name="Nucleic Acids Res.">
        <title>Genome dynamics and diversity of Shigella species, the etiologic agents of bacillary dysentery.</title>
        <authorList>
            <person name="Yang F."/>
            <person name="Yang J."/>
            <person name="Zhang X."/>
            <person name="Chen L."/>
            <person name="Jiang Y."/>
            <person name="Yan Y."/>
            <person name="Tang X."/>
            <person name="Wang J."/>
            <person name="Xiong Z."/>
            <person name="Dong J."/>
            <person name="Xue Y."/>
            <person name="Zhu Y."/>
            <person name="Xu X."/>
            <person name="Sun L."/>
            <person name="Chen S."/>
            <person name="Nie H."/>
            <person name="Peng J."/>
            <person name="Xu J."/>
            <person name="Wang Y."/>
            <person name="Yuan Z."/>
            <person name="Wen Y."/>
            <person name="Yao Z."/>
            <person name="Shen Y."/>
            <person name="Qiang B."/>
            <person name="Hou Y."/>
            <person name="Yu J."/>
            <person name="Jin Q."/>
        </authorList>
    </citation>
    <scope>NUCLEOTIDE SEQUENCE [LARGE SCALE GENOMIC DNA]</scope>
    <source>
        <strain>Sb227</strain>
    </source>
</reference>
<keyword id="KW-0378">Hydrolase</keyword>
<keyword id="KW-0546">Nucleotide metabolism</keyword>
<keyword id="KW-0547">Nucleotide-binding</keyword>
<protein>
    <recommendedName>
        <fullName evidence="1">dCTP deaminase</fullName>
        <ecNumber evidence="1">3.5.4.13</ecNumber>
    </recommendedName>
    <alternativeName>
        <fullName evidence="1">Deoxycytidine triphosphate deaminase</fullName>
    </alternativeName>
</protein>
<accession>Q323E8</accession>